<protein>
    <recommendedName>
        <fullName evidence="1">Argininosuccinate synthase</fullName>
        <ecNumber evidence="1">6.3.4.5</ecNumber>
    </recommendedName>
    <alternativeName>
        <fullName evidence="1">Citrulline--aspartate ligase</fullName>
    </alternativeName>
</protein>
<sequence length="446" mass="49697">MTTILENLPAGQKVGIAFSGGLDTSAALHWMRIKGAVPYAYTANLGQPDEDDYDAIPKRAIQYGAEGARLIDCRAQLVAEGIAALQCGAFHISTAGVTYFNTTPIGRAVTGTMLVAAMKEDGVNIWGDGSTYKGNDIERFYRYGLLVNPDLKIYKPWLDQQFIDELGGRAEMSEFMRQAGFEYKMSAEKAYSTDSNLLGATHEAKDLESLESGIKIVNPIMGVAFWRDDVKIDKEEVTIRFEEGRPVALNGVEYKDAVALLLEANRIGGRHGLGMSDQIENRIIEAKSRGIYEAPGLALLYIAYERLVTGIHNEDTIEQYRENGRRLGRLLYQGRWFDPQAIMLRETAQRWVARAVTGEVTVELRRGNDYSIIGTRSPNLTYQPERLSMEKVQSMFSPRDRIGQLTMRNLDITDTRDKLRIYSQVGLLAAGESSALPKLKEDESGN</sequence>
<accession>A2S7V6</accession>
<dbReference type="EC" id="6.3.4.5" evidence="1"/>
<dbReference type="EMBL" id="CP000546">
    <property type="protein sequence ID" value="ABN01309.1"/>
    <property type="molecule type" value="Genomic_DNA"/>
</dbReference>
<dbReference type="RefSeq" id="WP_004189990.1">
    <property type="nucleotide sequence ID" value="NC_008836.1"/>
</dbReference>
<dbReference type="SMR" id="A2S7V6"/>
<dbReference type="GeneID" id="93058813"/>
<dbReference type="KEGG" id="bml:BMA10229_A2061"/>
<dbReference type="HOGENOM" id="CLU_032784_4_1_4"/>
<dbReference type="UniPathway" id="UPA00068">
    <property type="reaction ID" value="UER00113"/>
</dbReference>
<dbReference type="Proteomes" id="UP000002283">
    <property type="component" value="Chromosome I"/>
</dbReference>
<dbReference type="GO" id="GO:0005737">
    <property type="term" value="C:cytoplasm"/>
    <property type="evidence" value="ECO:0007669"/>
    <property type="project" value="UniProtKB-SubCell"/>
</dbReference>
<dbReference type="GO" id="GO:0004055">
    <property type="term" value="F:argininosuccinate synthase activity"/>
    <property type="evidence" value="ECO:0007669"/>
    <property type="project" value="UniProtKB-UniRule"/>
</dbReference>
<dbReference type="GO" id="GO:0005524">
    <property type="term" value="F:ATP binding"/>
    <property type="evidence" value="ECO:0007669"/>
    <property type="project" value="UniProtKB-UniRule"/>
</dbReference>
<dbReference type="GO" id="GO:0042803">
    <property type="term" value="F:protein homodimerization activity"/>
    <property type="evidence" value="ECO:0007669"/>
    <property type="project" value="InterPro"/>
</dbReference>
<dbReference type="GO" id="GO:0000053">
    <property type="term" value="P:argininosuccinate metabolic process"/>
    <property type="evidence" value="ECO:0007669"/>
    <property type="project" value="TreeGrafter"/>
</dbReference>
<dbReference type="GO" id="GO:0006526">
    <property type="term" value="P:L-arginine biosynthetic process"/>
    <property type="evidence" value="ECO:0007669"/>
    <property type="project" value="UniProtKB-UniRule"/>
</dbReference>
<dbReference type="GO" id="GO:0000050">
    <property type="term" value="P:urea cycle"/>
    <property type="evidence" value="ECO:0007669"/>
    <property type="project" value="TreeGrafter"/>
</dbReference>
<dbReference type="CDD" id="cd01999">
    <property type="entry name" value="ASS"/>
    <property type="match status" value="1"/>
</dbReference>
<dbReference type="FunFam" id="1.10.287.400:FF:000001">
    <property type="entry name" value="Argininosuccinate synthase"/>
    <property type="match status" value="1"/>
</dbReference>
<dbReference type="Gene3D" id="1.10.287.400">
    <property type="match status" value="1"/>
</dbReference>
<dbReference type="Gene3D" id="3.90.1260.10">
    <property type="entry name" value="Argininosuccinate synthetase, chain A, domain 2"/>
    <property type="match status" value="1"/>
</dbReference>
<dbReference type="Gene3D" id="3.40.50.620">
    <property type="entry name" value="HUPs"/>
    <property type="match status" value="1"/>
</dbReference>
<dbReference type="HAMAP" id="MF_00581">
    <property type="entry name" value="Arg_succ_synth_type2"/>
    <property type="match status" value="1"/>
</dbReference>
<dbReference type="InterPro" id="IPR023437">
    <property type="entry name" value="Arg_succ_synth_type2_subfam"/>
</dbReference>
<dbReference type="InterPro" id="IPR048268">
    <property type="entry name" value="Arginosuc_syn_C"/>
</dbReference>
<dbReference type="InterPro" id="IPR048267">
    <property type="entry name" value="Arginosuc_syn_N"/>
</dbReference>
<dbReference type="InterPro" id="IPR001518">
    <property type="entry name" value="Arginosuc_synth"/>
</dbReference>
<dbReference type="InterPro" id="IPR018223">
    <property type="entry name" value="Arginosuc_synth_CS"/>
</dbReference>
<dbReference type="InterPro" id="IPR023434">
    <property type="entry name" value="Arginosuc_synth_type_1_subfam"/>
</dbReference>
<dbReference type="InterPro" id="IPR024074">
    <property type="entry name" value="AS_cat/multimer_dom_body"/>
</dbReference>
<dbReference type="InterPro" id="IPR024073">
    <property type="entry name" value="AS_multimer_C_tail"/>
</dbReference>
<dbReference type="InterPro" id="IPR014729">
    <property type="entry name" value="Rossmann-like_a/b/a_fold"/>
</dbReference>
<dbReference type="NCBIfam" id="TIGR00032">
    <property type="entry name" value="argG"/>
    <property type="match status" value="1"/>
</dbReference>
<dbReference type="NCBIfam" id="NF003779">
    <property type="entry name" value="PRK05370.1"/>
    <property type="match status" value="1"/>
</dbReference>
<dbReference type="PANTHER" id="PTHR11587">
    <property type="entry name" value="ARGININOSUCCINATE SYNTHASE"/>
    <property type="match status" value="1"/>
</dbReference>
<dbReference type="PANTHER" id="PTHR11587:SF2">
    <property type="entry name" value="ARGININOSUCCINATE SYNTHASE"/>
    <property type="match status" value="1"/>
</dbReference>
<dbReference type="Pfam" id="PF20979">
    <property type="entry name" value="Arginosuc_syn_C"/>
    <property type="match status" value="1"/>
</dbReference>
<dbReference type="Pfam" id="PF00764">
    <property type="entry name" value="Arginosuc_synth"/>
    <property type="match status" value="1"/>
</dbReference>
<dbReference type="SUPFAM" id="SSF52402">
    <property type="entry name" value="Adenine nucleotide alpha hydrolases-like"/>
    <property type="match status" value="1"/>
</dbReference>
<dbReference type="SUPFAM" id="SSF69864">
    <property type="entry name" value="Argininosuccinate synthetase, C-terminal domain"/>
    <property type="match status" value="1"/>
</dbReference>
<dbReference type="PROSITE" id="PS00564">
    <property type="entry name" value="ARGININOSUCCIN_SYN_1"/>
    <property type="match status" value="1"/>
</dbReference>
<dbReference type="PROSITE" id="PS00565">
    <property type="entry name" value="ARGININOSUCCIN_SYN_2"/>
    <property type="match status" value="1"/>
</dbReference>
<comment type="catalytic activity">
    <reaction evidence="1">
        <text>L-citrulline + L-aspartate + ATP = 2-(N(omega)-L-arginino)succinate + AMP + diphosphate + H(+)</text>
        <dbReference type="Rhea" id="RHEA:10932"/>
        <dbReference type="ChEBI" id="CHEBI:15378"/>
        <dbReference type="ChEBI" id="CHEBI:29991"/>
        <dbReference type="ChEBI" id="CHEBI:30616"/>
        <dbReference type="ChEBI" id="CHEBI:33019"/>
        <dbReference type="ChEBI" id="CHEBI:57472"/>
        <dbReference type="ChEBI" id="CHEBI:57743"/>
        <dbReference type="ChEBI" id="CHEBI:456215"/>
        <dbReference type="EC" id="6.3.4.5"/>
    </reaction>
</comment>
<comment type="pathway">
    <text evidence="1">Amino-acid biosynthesis; L-arginine biosynthesis; L-arginine from L-ornithine and carbamoyl phosphate: step 2/3.</text>
</comment>
<comment type="subunit">
    <text evidence="1">Homotetramer.</text>
</comment>
<comment type="subcellular location">
    <subcellularLocation>
        <location evidence="1">Cytoplasm</location>
    </subcellularLocation>
</comment>
<comment type="similarity">
    <text evidence="1">Belongs to the argininosuccinate synthase family. Type 2 subfamily.</text>
</comment>
<keyword id="KW-0028">Amino-acid biosynthesis</keyword>
<keyword id="KW-0055">Arginine biosynthesis</keyword>
<keyword id="KW-0067">ATP-binding</keyword>
<keyword id="KW-0963">Cytoplasm</keyword>
<keyword id="KW-0436">Ligase</keyword>
<keyword id="KW-0547">Nucleotide-binding</keyword>
<proteinExistence type="inferred from homology"/>
<organism>
    <name type="scientific">Burkholderia mallei (strain NCTC 10229)</name>
    <dbReference type="NCBI Taxonomy" id="412022"/>
    <lineage>
        <taxon>Bacteria</taxon>
        <taxon>Pseudomonadati</taxon>
        <taxon>Pseudomonadota</taxon>
        <taxon>Betaproteobacteria</taxon>
        <taxon>Burkholderiales</taxon>
        <taxon>Burkholderiaceae</taxon>
        <taxon>Burkholderia</taxon>
        <taxon>pseudomallei group</taxon>
    </lineage>
</organism>
<evidence type="ECO:0000255" key="1">
    <source>
        <dbReference type="HAMAP-Rule" id="MF_00581"/>
    </source>
</evidence>
<reference key="1">
    <citation type="journal article" date="2010" name="Genome Biol. Evol.">
        <title>Continuing evolution of Burkholderia mallei through genome reduction and large-scale rearrangements.</title>
        <authorList>
            <person name="Losada L."/>
            <person name="Ronning C.M."/>
            <person name="DeShazer D."/>
            <person name="Woods D."/>
            <person name="Fedorova N."/>
            <person name="Kim H.S."/>
            <person name="Shabalina S.A."/>
            <person name="Pearson T.R."/>
            <person name="Brinkac L."/>
            <person name="Tan P."/>
            <person name="Nandi T."/>
            <person name="Crabtree J."/>
            <person name="Badger J."/>
            <person name="Beckstrom-Sternberg S."/>
            <person name="Saqib M."/>
            <person name="Schutzer S.E."/>
            <person name="Keim P."/>
            <person name="Nierman W.C."/>
        </authorList>
    </citation>
    <scope>NUCLEOTIDE SEQUENCE [LARGE SCALE GENOMIC DNA]</scope>
    <source>
        <strain>NCTC 10229</strain>
    </source>
</reference>
<name>ASSY_BURM9</name>
<gene>
    <name evidence="1" type="primary">argG</name>
    <name type="ordered locus">BMA10229_A2061</name>
</gene>
<feature type="chain" id="PRO_1000025412" description="Argininosuccinate synthase">
    <location>
        <begin position="1"/>
        <end position="446"/>
    </location>
</feature>
<feature type="binding site" evidence="1">
    <location>
        <begin position="17"/>
        <end position="25"/>
    </location>
    <ligand>
        <name>ATP</name>
        <dbReference type="ChEBI" id="CHEBI:30616"/>
    </ligand>
</feature>
<feature type="binding site" evidence="1">
    <location>
        <position position="43"/>
    </location>
    <ligand>
        <name>ATP</name>
        <dbReference type="ChEBI" id="CHEBI:30616"/>
    </ligand>
</feature>
<feature type="binding site" evidence="1">
    <location>
        <position position="99"/>
    </location>
    <ligand>
        <name>L-citrulline</name>
        <dbReference type="ChEBI" id="CHEBI:57743"/>
    </ligand>
</feature>
<feature type="binding site" evidence="1">
    <location>
        <position position="129"/>
    </location>
    <ligand>
        <name>ATP</name>
        <dbReference type="ChEBI" id="CHEBI:30616"/>
    </ligand>
</feature>
<feature type="binding site" evidence="1">
    <location>
        <position position="131"/>
    </location>
    <ligand>
        <name>ATP</name>
        <dbReference type="ChEBI" id="CHEBI:30616"/>
    </ligand>
</feature>
<feature type="binding site" evidence="1">
    <location>
        <position position="131"/>
    </location>
    <ligand>
        <name>L-aspartate</name>
        <dbReference type="ChEBI" id="CHEBI:29991"/>
    </ligand>
</feature>
<feature type="binding site" evidence="1">
    <location>
        <position position="135"/>
    </location>
    <ligand>
        <name>L-aspartate</name>
        <dbReference type="ChEBI" id="CHEBI:29991"/>
    </ligand>
</feature>
<feature type="binding site" evidence="1">
    <location>
        <position position="135"/>
    </location>
    <ligand>
        <name>L-citrulline</name>
        <dbReference type="ChEBI" id="CHEBI:57743"/>
    </ligand>
</feature>
<feature type="binding site" evidence="1">
    <location>
        <position position="136"/>
    </location>
    <ligand>
        <name>ATP</name>
        <dbReference type="ChEBI" id="CHEBI:30616"/>
    </ligand>
</feature>
<feature type="binding site" evidence="1">
    <location>
        <position position="136"/>
    </location>
    <ligand>
        <name>L-aspartate</name>
        <dbReference type="ChEBI" id="CHEBI:29991"/>
    </ligand>
</feature>
<feature type="binding site" evidence="1">
    <location>
        <position position="139"/>
    </location>
    <ligand>
        <name>L-citrulline</name>
        <dbReference type="ChEBI" id="CHEBI:57743"/>
    </ligand>
</feature>
<feature type="binding site" evidence="1">
    <location>
        <position position="192"/>
    </location>
    <ligand>
        <name>L-citrulline</name>
        <dbReference type="ChEBI" id="CHEBI:57743"/>
    </ligand>
</feature>
<feature type="binding site" evidence="1">
    <location>
        <position position="194"/>
    </location>
    <ligand>
        <name>ATP</name>
        <dbReference type="ChEBI" id="CHEBI:30616"/>
    </ligand>
</feature>
<feature type="binding site" evidence="1">
    <location>
        <position position="201"/>
    </location>
    <ligand>
        <name>L-citrulline</name>
        <dbReference type="ChEBI" id="CHEBI:57743"/>
    </ligand>
</feature>
<feature type="binding site" evidence="1">
    <location>
        <position position="203"/>
    </location>
    <ligand>
        <name>L-citrulline</name>
        <dbReference type="ChEBI" id="CHEBI:57743"/>
    </ligand>
</feature>
<feature type="binding site" evidence="1">
    <location>
        <position position="280"/>
    </location>
    <ligand>
        <name>L-citrulline</name>
        <dbReference type="ChEBI" id="CHEBI:57743"/>
    </ligand>
</feature>